<dbReference type="GO" id="GO:0005576">
    <property type="term" value="C:extracellular region"/>
    <property type="evidence" value="ECO:0007669"/>
    <property type="project" value="UniProtKB-SubCell"/>
</dbReference>
<dbReference type="GO" id="GO:0016020">
    <property type="term" value="C:membrane"/>
    <property type="evidence" value="ECO:0007669"/>
    <property type="project" value="UniProtKB-KW"/>
</dbReference>
<dbReference type="GO" id="GO:0044218">
    <property type="term" value="C:other organism cell membrane"/>
    <property type="evidence" value="ECO:0007669"/>
    <property type="project" value="UniProtKB-KW"/>
</dbReference>
<dbReference type="GO" id="GO:0042742">
    <property type="term" value="P:defense response to bacterium"/>
    <property type="evidence" value="ECO:0007669"/>
    <property type="project" value="UniProtKB-KW"/>
</dbReference>
<dbReference type="GO" id="GO:0031640">
    <property type="term" value="P:killing of cells of another organism"/>
    <property type="evidence" value="ECO:0007669"/>
    <property type="project" value="UniProtKB-KW"/>
</dbReference>
<dbReference type="InterPro" id="IPR012523">
    <property type="entry name" value="Antimicrobial_4"/>
</dbReference>
<dbReference type="Pfam" id="PF08024">
    <property type="entry name" value="Antimicrobial_4"/>
    <property type="match status" value="1"/>
</dbReference>
<evidence type="ECO:0000269" key="1">
    <source>
    </source>
</evidence>
<evidence type="ECO:0000303" key="2">
    <source>
    </source>
</evidence>
<evidence type="ECO:0000303" key="3">
    <source>
    </source>
</evidence>
<evidence type="ECO:0000305" key="4"/>
<evidence type="ECO:0000305" key="5">
    <source>
    </source>
</evidence>
<reference key="1">
    <citation type="journal article" date="2013" name="J. Antibiot.">
        <title>Antimicrobial peptides from arachnid venoms and their microbicidal activity in the presence of commercial antibiotics.</title>
        <authorList>
            <person name="Garcia F."/>
            <person name="Villegas E."/>
            <person name="Espino-Solis G.P."/>
            <person name="Rodriguez A."/>
            <person name="Paniagua-Solis J.F."/>
            <person name="Sandoval-Lopez G."/>
            <person name="Possani L.D."/>
            <person name="Corzo G."/>
        </authorList>
    </citation>
    <scope>PROTEIN SEQUENCE</scope>
    <scope>FUNCTION</scope>
    <scope>SYNTHESIS</scope>
    <scope>SUBCELLULAR LOCATION</scope>
    <scope>CIRCULAR DICHROISM</scope>
    <scope>MASS SPECTROMETRY</scope>
    <source>
        <tissue>Venom</tissue>
    </source>
</reference>
<reference key="2">
    <citation type="journal article" date="2014" name="Peptides">
        <title>Scorpion venom peptides with no disulfide bridges: a review.</title>
        <authorList>
            <person name="Almaaytah A."/>
            <person name="Albalas Q."/>
        </authorList>
    </citation>
    <scope>NOMENCLATURE</scope>
</reference>
<comment type="function">
    <text evidence="1">Amphipathic peptide that shows antibacterial activity against E.coli (MIC=12.5 ug/ml) and S.aureus (MIC=12.5 ug/ml). Has hemolytic activity against human erythrocytes (25 uM provokes 83% of hemolysis). May act by disrupting the integrity of the bacterial cell membrane. Increases efficacy of antibiotics (ethambutol, pyrazinamide, isoniazid, rifampicin) when tested against S.aureus, probably by facilitating their incorporation into the bacteria.</text>
</comment>
<comment type="subcellular location">
    <subcellularLocation>
        <location evidence="1">Secreted</location>
    </subcellularLocation>
    <subcellularLocation>
        <location evidence="5">Target cell membrane</location>
    </subcellularLocation>
    <text evidence="5">Forms a helical membrane channel in the prey.</text>
</comment>
<comment type="tissue specificity">
    <text evidence="4">Expressed by the venom gland.</text>
</comment>
<comment type="mass spectrometry" mass="2870.4" method="Electrospray" evidence="1"/>
<comment type="similarity">
    <text evidence="4">Belongs to the non-disulfide-bridged peptide (NDBP) superfamily. Medium-length antimicrobial peptide (group 3) family.</text>
</comment>
<accession>P0DL41</accession>
<proteinExistence type="evidence at protein level"/>
<keyword id="KW-0044">Antibiotic</keyword>
<keyword id="KW-0929">Antimicrobial</keyword>
<keyword id="KW-0204">Cytolysis</keyword>
<keyword id="KW-0903">Direct protein sequencing</keyword>
<keyword id="KW-0354">Hemolysis</keyword>
<keyword id="KW-0472">Membrane</keyword>
<keyword id="KW-0964">Secreted</keyword>
<keyword id="KW-1052">Target cell membrane</keyword>
<keyword id="KW-1053">Target membrane</keyword>
<protein>
    <recommendedName>
        <fullName evidence="2">Css54</fullName>
    </recommendedName>
    <alternativeName>
        <fullName evidence="3">Non-disulfide-bridged peptide 3.2</fullName>
        <shortName evidence="3">NDBP-3.2</shortName>
    </alternativeName>
</protein>
<organism>
    <name type="scientific">Centruroides suffusus</name>
    <name type="common">Durango bark scorpion</name>
    <dbReference type="NCBI Taxonomy" id="6880"/>
    <lineage>
        <taxon>Eukaryota</taxon>
        <taxon>Metazoa</taxon>
        <taxon>Ecdysozoa</taxon>
        <taxon>Arthropoda</taxon>
        <taxon>Chelicerata</taxon>
        <taxon>Arachnida</taxon>
        <taxon>Scorpiones</taxon>
        <taxon>Buthida</taxon>
        <taxon>Buthoidea</taxon>
        <taxon>Buthidae</taxon>
        <taxon>Centruroides</taxon>
    </lineage>
</organism>
<feature type="peptide" id="PRO_0000432338" description="Css54">
    <location>
        <begin position="1"/>
        <end position="25"/>
    </location>
</feature>
<sequence length="25" mass="2870">FFGSLLSLGSKLLPSVFKLFQRKKE</sequence>
<name>NDB32_CENSU</name>